<proteinExistence type="inferred from homology"/>
<reference key="1">
    <citation type="journal article" date="2006" name="Genome Biol.">
        <title>Genomic analysis reveals that Pseudomonas aeruginosa virulence is combinatorial.</title>
        <authorList>
            <person name="Lee D.G."/>
            <person name="Urbach J.M."/>
            <person name="Wu G."/>
            <person name="Liberati N.T."/>
            <person name="Feinbaum R.L."/>
            <person name="Miyata S."/>
            <person name="Diggins L.T."/>
            <person name="He J."/>
            <person name="Saucier M."/>
            <person name="Deziel E."/>
            <person name="Friedman L."/>
            <person name="Li L."/>
            <person name="Grills G."/>
            <person name="Montgomery K."/>
            <person name="Kucherlapati R."/>
            <person name="Rahme L.G."/>
            <person name="Ausubel F.M."/>
        </authorList>
    </citation>
    <scope>NUCLEOTIDE SEQUENCE [LARGE SCALE GENOMIC DNA]</scope>
    <source>
        <strain>UCBPP-PA14</strain>
    </source>
</reference>
<keyword id="KW-0963">Cytoplasm</keyword>
<keyword id="KW-0269">Exonuclease</keyword>
<keyword id="KW-0378">Hydrolase</keyword>
<keyword id="KW-0540">Nuclease</keyword>
<comment type="function">
    <text evidence="1">Bidirectionally degrades single-stranded DNA into large acid-insoluble oligonucleotides, which are then degraded further into small acid-soluble oligonucleotides.</text>
</comment>
<comment type="catalytic activity">
    <reaction evidence="1">
        <text>Exonucleolytic cleavage in either 5'- to 3'- or 3'- to 5'-direction to yield nucleoside 5'-phosphates.</text>
        <dbReference type="EC" id="3.1.11.6"/>
    </reaction>
</comment>
<comment type="subunit">
    <text evidence="1">Heterooligomer composed of large and small subunits.</text>
</comment>
<comment type="subcellular location">
    <subcellularLocation>
        <location evidence="1">Cytoplasm</location>
    </subcellularLocation>
</comment>
<comment type="similarity">
    <text evidence="1">Belongs to the XseB family.</text>
</comment>
<organism>
    <name type="scientific">Pseudomonas aeruginosa (strain UCBPP-PA14)</name>
    <dbReference type="NCBI Taxonomy" id="208963"/>
    <lineage>
        <taxon>Bacteria</taxon>
        <taxon>Pseudomonadati</taxon>
        <taxon>Pseudomonadota</taxon>
        <taxon>Gammaproteobacteria</taxon>
        <taxon>Pseudomonadales</taxon>
        <taxon>Pseudomonadaceae</taxon>
        <taxon>Pseudomonas</taxon>
    </lineage>
</organism>
<name>EX7S_PSEAB</name>
<sequence>MARKKTLDFEQSLTELQTLVERLESGELSLEESLGAFEQGIRLTRECQTSLSQAEQKVQILLERDGELSEAPFDAEGDEA</sequence>
<accession>Q02SK9</accession>
<protein>
    <recommendedName>
        <fullName evidence="1">Exodeoxyribonuclease 7 small subunit</fullName>
        <ecNumber evidence="1">3.1.11.6</ecNumber>
    </recommendedName>
    <alternativeName>
        <fullName evidence="1">Exodeoxyribonuclease VII small subunit</fullName>
        <shortName evidence="1">Exonuclease VII small subunit</shortName>
    </alternativeName>
</protein>
<evidence type="ECO:0000255" key="1">
    <source>
        <dbReference type="HAMAP-Rule" id="MF_00337"/>
    </source>
</evidence>
<gene>
    <name evidence="1" type="primary">xseB</name>
    <name type="ordered locus">PA14_11570</name>
</gene>
<feature type="chain" id="PRO_0000303734" description="Exodeoxyribonuclease 7 small subunit">
    <location>
        <begin position="1"/>
        <end position="80"/>
    </location>
</feature>
<dbReference type="EC" id="3.1.11.6" evidence="1"/>
<dbReference type="EMBL" id="CP000438">
    <property type="protein sequence ID" value="ABJ13315.1"/>
    <property type="molecule type" value="Genomic_DNA"/>
</dbReference>
<dbReference type="RefSeq" id="WP_003093283.1">
    <property type="nucleotide sequence ID" value="NZ_CP034244.1"/>
</dbReference>
<dbReference type="SMR" id="Q02SK9"/>
<dbReference type="KEGG" id="pau:PA14_11570"/>
<dbReference type="PseudoCAP" id="PA14_11570"/>
<dbReference type="HOGENOM" id="CLU_145918_3_3_6"/>
<dbReference type="BioCyc" id="PAER208963:G1G74-962-MONOMER"/>
<dbReference type="Proteomes" id="UP000000653">
    <property type="component" value="Chromosome"/>
</dbReference>
<dbReference type="GO" id="GO:0005829">
    <property type="term" value="C:cytosol"/>
    <property type="evidence" value="ECO:0007669"/>
    <property type="project" value="TreeGrafter"/>
</dbReference>
<dbReference type="GO" id="GO:0009318">
    <property type="term" value="C:exodeoxyribonuclease VII complex"/>
    <property type="evidence" value="ECO:0007669"/>
    <property type="project" value="InterPro"/>
</dbReference>
<dbReference type="GO" id="GO:0008855">
    <property type="term" value="F:exodeoxyribonuclease VII activity"/>
    <property type="evidence" value="ECO:0007669"/>
    <property type="project" value="UniProtKB-UniRule"/>
</dbReference>
<dbReference type="GO" id="GO:0006308">
    <property type="term" value="P:DNA catabolic process"/>
    <property type="evidence" value="ECO:0007669"/>
    <property type="project" value="UniProtKB-UniRule"/>
</dbReference>
<dbReference type="FunFam" id="1.10.287.1040:FF:000011">
    <property type="entry name" value="Exodeoxyribonuclease 7 small subunit"/>
    <property type="match status" value="1"/>
</dbReference>
<dbReference type="Gene3D" id="1.10.287.1040">
    <property type="entry name" value="Exonuclease VII, small subunit"/>
    <property type="match status" value="1"/>
</dbReference>
<dbReference type="HAMAP" id="MF_00337">
    <property type="entry name" value="Exonuc_7_S"/>
    <property type="match status" value="1"/>
</dbReference>
<dbReference type="InterPro" id="IPR003761">
    <property type="entry name" value="Exonuc_VII_S"/>
</dbReference>
<dbReference type="InterPro" id="IPR037004">
    <property type="entry name" value="Exonuc_VII_ssu_sf"/>
</dbReference>
<dbReference type="NCBIfam" id="NF002140">
    <property type="entry name" value="PRK00977.1-4"/>
    <property type="match status" value="1"/>
</dbReference>
<dbReference type="NCBIfam" id="TIGR01280">
    <property type="entry name" value="xseB"/>
    <property type="match status" value="1"/>
</dbReference>
<dbReference type="PANTHER" id="PTHR34137">
    <property type="entry name" value="EXODEOXYRIBONUCLEASE 7 SMALL SUBUNIT"/>
    <property type="match status" value="1"/>
</dbReference>
<dbReference type="PANTHER" id="PTHR34137:SF1">
    <property type="entry name" value="EXODEOXYRIBONUCLEASE 7 SMALL SUBUNIT"/>
    <property type="match status" value="1"/>
</dbReference>
<dbReference type="Pfam" id="PF02609">
    <property type="entry name" value="Exonuc_VII_S"/>
    <property type="match status" value="1"/>
</dbReference>
<dbReference type="PIRSF" id="PIRSF006488">
    <property type="entry name" value="Exonuc_VII_S"/>
    <property type="match status" value="1"/>
</dbReference>
<dbReference type="SUPFAM" id="SSF116842">
    <property type="entry name" value="XseB-like"/>
    <property type="match status" value="1"/>
</dbReference>